<evidence type="ECO:0000250" key="1">
    <source>
        <dbReference type="UniProtKB" id="Q9RC92"/>
    </source>
</evidence>
<evidence type="ECO:0000255" key="2"/>
<evidence type="ECO:0000269" key="3">
    <source>
    </source>
</evidence>
<evidence type="ECO:0000303" key="4">
    <source>
    </source>
</evidence>
<evidence type="ECO:0000305" key="5"/>
<evidence type="ECO:0000305" key="6">
    <source>
    </source>
</evidence>
<name>PLH1_FORAG</name>
<keyword id="KW-0378">Hydrolase</keyword>
<keyword id="KW-1185">Reference proteome</keyword>
<keyword id="KW-0732">Signal</keyword>
<dbReference type="EC" id="3.2.1.-" evidence="3"/>
<dbReference type="EMBL" id="HG315671">
    <property type="protein sequence ID" value="CDF79902.1"/>
    <property type="molecule type" value="Genomic_DNA"/>
</dbReference>
<dbReference type="RefSeq" id="WP_038530475.1">
    <property type="nucleotide sequence ID" value="NZ_HG315671.1"/>
</dbReference>
<dbReference type="SMR" id="T2KLZ3"/>
<dbReference type="STRING" id="1347342.BN863_21900"/>
<dbReference type="PATRIC" id="fig|1347342.6.peg.2197"/>
<dbReference type="eggNOG" id="COG4225">
    <property type="taxonomic scope" value="Bacteria"/>
</dbReference>
<dbReference type="HOGENOM" id="CLU_027158_0_0_10"/>
<dbReference type="OrthoDB" id="428577at2"/>
<dbReference type="Proteomes" id="UP000016160">
    <property type="component" value="Chromosome"/>
</dbReference>
<dbReference type="GO" id="GO:0009986">
    <property type="term" value="C:cell surface"/>
    <property type="evidence" value="ECO:0007669"/>
    <property type="project" value="UniProtKB-SubCell"/>
</dbReference>
<dbReference type="GO" id="GO:0052757">
    <property type="term" value="F:chondroitin hydrolase activity"/>
    <property type="evidence" value="ECO:0007669"/>
    <property type="project" value="TreeGrafter"/>
</dbReference>
<dbReference type="GO" id="GO:0000272">
    <property type="term" value="P:polysaccharide catabolic process"/>
    <property type="evidence" value="ECO:0007669"/>
    <property type="project" value="TreeGrafter"/>
</dbReference>
<dbReference type="Gene3D" id="1.50.10.10">
    <property type="match status" value="1"/>
</dbReference>
<dbReference type="InterPro" id="IPR008928">
    <property type="entry name" value="6-hairpin_glycosidase_sf"/>
</dbReference>
<dbReference type="InterPro" id="IPR012341">
    <property type="entry name" value="6hp_glycosidase-like_sf"/>
</dbReference>
<dbReference type="InterPro" id="IPR052369">
    <property type="entry name" value="UG_Glycosaminoglycan_Hydrolase"/>
</dbReference>
<dbReference type="PANTHER" id="PTHR36845">
    <property type="entry name" value="HYDROLASE, PUTATIVE (AFU_ORTHOLOGUE AFUA_7G05090)-RELATED"/>
    <property type="match status" value="1"/>
</dbReference>
<dbReference type="PANTHER" id="PTHR36845:SF1">
    <property type="entry name" value="HYDROLASE, PUTATIVE (AFU_ORTHOLOGUE AFUA_7G05090)-RELATED"/>
    <property type="match status" value="1"/>
</dbReference>
<dbReference type="SUPFAM" id="SSF48208">
    <property type="entry name" value="Six-hairpin glycosidases"/>
    <property type="match status" value="1"/>
</dbReference>
<organism>
    <name type="scientific">Formosa agariphila (strain DSM 15362 / KCTC 12365 / LMG 23005 / KMM 3901 / M-2Alg 35-1)</name>
    <dbReference type="NCBI Taxonomy" id="1347342"/>
    <lineage>
        <taxon>Bacteria</taxon>
        <taxon>Pseudomonadati</taxon>
        <taxon>Bacteroidota</taxon>
        <taxon>Flavobacteriia</taxon>
        <taxon>Flavobacteriales</taxon>
        <taxon>Flavobacteriaceae</taxon>
        <taxon>Formosa</taxon>
    </lineage>
</organism>
<feature type="signal peptide" evidence="2">
    <location>
        <begin position="1"/>
        <end position="20"/>
    </location>
</feature>
<feature type="chain" id="PRO_0000448303" description="Unsaturated glucuronyl hydrolase">
    <location>
        <begin position="21"/>
        <end position="400"/>
    </location>
</feature>
<feature type="active site" description="Nucleophile" evidence="1">
    <location>
        <position position="120"/>
    </location>
</feature>
<feature type="active site" description="Proton donor" evidence="1">
    <location>
        <position position="181"/>
    </location>
</feature>
<gene>
    <name type="ORF">BN863_21900</name>
</gene>
<accession>T2KLZ3</accession>
<sequence length="400" mass="46416">MRKLVYLVLVLGLTFLNVRCKSETKQNKKEEQNIGKQYSSLENRFQKLVNYPVGANNFPRSMSLAPEVVHKVPSKDWTSGFFPGNLWLIHELTGDSIYKVKAQEWTVLMEDQKENDRTHDMGFKVYCSFGEGLKQDPDNQYYKDVIIESAKTLITRYNDTVKSIRSWDFNKDVWDFPVIIDNMMNLELLFEATKISGDNIYHNIAVQHANTTLKHQFRPDYSVFHVINYDTISGVVKTKDTHQGFDRNSTWARGQAWAIYGYTMSYRYTNNPKYLAQAEATTQFYMEHENLPKDGVPYWDFNDPEISDAPRDASAAAIVTSALFELYTYTNNKTYLDFATQVLNTLNSEAYLLKDTVNGPFILNHSTGNWPKNDEIDEPIVYGDYYFLEALKRKQNLILK</sequence>
<proteinExistence type="evidence at protein level"/>
<comment type="function">
    <text evidence="3 6">Unsaturated glucuronyl hydrolase involved in ulvan degradation (PubMed:31285597). Ulvan is the main polysaccharide component of the Ulvales (green seaweed) cell wall. It is composed of disaccharide building blocks comprising 3-sulfated rhamnose (Rha3S) linked to D-glucuronic acid (GlcA), L-iduronic acid (IduA), or D-xylose (Xyl) (Probable). Unsaturated glucuronyl hydrolase catalyzes the cleavage of the unsaturated 4-deoxy-L-threo-hex-4-enopyranosiduronic acid (deltaUA) at the non-reducing end of ulvan oligomers, thus forming 5-dehydro-4-deoxy-D-glucuronate (PubMed:31285597).</text>
</comment>
<comment type="subcellular location">
    <subcellularLocation>
        <location evidence="6">Cell surface</location>
    </subcellularLocation>
</comment>
<comment type="similarity">
    <text evidence="5">Belongs to the glycosyl hydrolase 88 family.</text>
</comment>
<protein>
    <recommendedName>
        <fullName evidence="4">Unsaturated glucuronyl hydrolase</fullName>
        <shortName>UGL</shortName>
        <ecNumber evidence="3">3.2.1.-</ecNumber>
    </recommendedName>
    <alternativeName>
        <fullName evidence="5">Glycosyl hydrolase 88 family protein P1</fullName>
        <shortName evidence="4">P1_GH88</shortName>
    </alternativeName>
    <alternativeName>
        <fullName evidence="4">Polysaccharide utilization locus H protein P1</fullName>
        <shortName>PUL H protein P1</shortName>
    </alternativeName>
</protein>
<reference key="1">
    <citation type="journal article" date="2013" name="Appl. Environ. Microbiol.">
        <title>The genome of the alga-associated marine flavobacterium Formosa agariphila KMM 3901T reveals a broad potential for degradation of algal polysaccharides.</title>
        <authorList>
            <person name="Mann A.J."/>
            <person name="Hahnke R.L."/>
            <person name="Huang S."/>
            <person name="Werner J."/>
            <person name="Xing P."/>
            <person name="Barbeyron T."/>
            <person name="Huettel B."/>
            <person name="Stueber K."/>
            <person name="Reinhardt R."/>
            <person name="Harder J."/>
            <person name="Gloeckner F.O."/>
            <person name="Amann R.I."/>
            <person name="Teeling H."/>
        </authorList>
    </citation>
    <scope>NUCLEOTIDE SEQUENCE [LARGE SCALE GENOMIC DNA]</scope>
    <source>
        <strain>DSM 15362 / KCTC 12365 / LMG 23005 / KMM 3901 / M-2Alg 35-1</strain>
    </source>
</reference>
<reference key="2">
    <citation type="journal article" date="2019" name="Nat. Chem. Biol.">
        <title>A marine bacterial enzymatic cascade degrades the algal polysaccharide ulvan.</title>
        <authorList>
            <person name="Reisky L."/>
            <person name="Prechoux A."/>
            <person name="Zuehlke M.K."/>
            <person name="Baeumgen M."/>
            <person name="Robb C.S."/>
            <person name="Gerlach N."/>
            <person name="Roret T."/>
            <person name="Stanetty C."/>
            <person name="Larocque R."/>
            <person name="Michel G."/>
            <person name="Song T."/>
            <person name="Markert S."/>
            <person name="Unfried F."/>
            <person name="Mihovilovic M.D."/>
            <person name="Trautwein-Schult A."/>
            <person name="Becher D."/>
            <person name="Schweder T."/>
            <person name="Bornscheuer U.T."/>
            <person name="Hehemann J.H."/>
        </authorList>
    </citation>
    <scope>FUNCTION</scope>
    <scope>CATALYTIC ACTIVITY</scope>
    <scope>SUBCELLULAR LOCATION</scope>
</reference>